<proteinExistence type="inferred from homology"/>
<keyword id="KW-0963">Cytoplasm</keyword>
<keyword id="KW-0396">Initiation factor</keyword>
<keyword id="KW-0648">Protein biosynthesis</keyword>
<dbReference type="EMBL" id="CP000792">
    <property type="protein sequence ID" value="EAT99125.3"/>
    <property type="molecule type" value="Genomic_DNA"/>
</dbReference>
<dbReference type="RefSeq" id="WP_009295104.1">
    <property type="nucleotide sequence ID" value="NC_009802.2"/>
</dbReference>
<dbReference type="SMR" id="A7ZAZ8"/>
<dbReference type="STRING" id="360104.CCC13826_1818"/>
<dbReference type="KEGG" id="cco:CCC13826_1818"/>
<dbReference type="eggNOG" id="COG0290">
    <property type="taxonomic scope" value="Bacteria"/>
</dbReference>
<dbReference type="HOGENOM" id="CLU_054919_3_2_7"/>
<dbReference type="OrthoDB" id="9806014at2"/>
<dbReference type="Proteomes" id="UP000001121">
    <property type="component" value="Chromosome"/>
</dbReference>
<dbReference type="GO" id="GO:0005829">
    <property type="term" value="C:cytosol"/>
    <property type="evidence" value="ECO:0007669"/>
    <property type="project" value="TreeGrafter"/>
</dbReference>
<dbReference type="GO" id="GO:0016020">
    <property type="term" value="C:membrane"/>
    <property type="evidence" value="ECO:0007669"/>
    <property type="project" value="TreeGrafter"/>
</dbReference>
<dbReference type="GO" id="GO:0043022">
    <property type="term" value="F:ribosome binding"/>
    <property type="evidence" value="ECO:0007669"/>
    <property type="project" value="TreeGrafter"/>
</dbReference>
<dbReference type="GO" id="GO:0003743">
    <property type="term" value="F:translation initiation factor activity"/>
    <property type="evidence" value="ECO:0007669"/>
    <property type="project" value="UniProtKB-UniRule"/>
</dbReference>
<dbReference type="GO" id="GO:0032790">
    <property type="term" value="P:ribosome disassembly"/>
    <property type="evidence" value="ECO:0007669"/>
    <property type="project" value="TreeGrafter"/>
</dbReference>
<dbReference type="FunFam" id="3.10.20.80:FF:000001">
    <property type="entry name" value="Translation initiation factor IF-3"/>
    <property type="match status" value="1"/>
</dbReference>
<dbReference type="Gene3D" id="3.30.110.10">
    <property type="entry name" value="Translation initiation factor 3 (IF-3), C-terminal domain"/>
    <property type="match status" value="1"/>
</dbReference>
<dbReference type="Gene3D" id="3.10.20.80">
    <property type="entry name" value="Translation initiation factor 3 (IF-3), N-terminal domain"/>
    <property type="match status" value="1"/>
</dbReference>
<dbReference type="HAMAP" id="MF_00080">
    <property type="entry name" value="IF_3"/>
    <property type="match status" value="1"/>
</dbReference>
<dbReference type="InterPro" id="IPR036788">
    <property type="entry name" value="T_IF-3_C_sf"/>
</dbReference>
<dbReference type="InterPro" id="IPR036787">
    <property type="entry name" value="T_IF-3_N_sf"/>
</dbReference>
<dbReference type="InterPro" id="IPR019813">
    <property type="entry name" value="Translation_initiation_fac3_CS"/>
</dbReference>
<dbReference type="InterPro" id="IPR001288">
    <property type="entry name" value="Translation_initiation_fac_3"/>
</dbReference>
<dbReference type="InterPro" id="IPR019815">
    <property type="entry name" value="Translation_initiation_fac_3_C"/>
</dbReference>
<dbReference type="InterPro" id="IPR019814">
    <property type="entry name" value="Translation_initiation_fac_3_N"/>
</dbReference>
<dbReference type="NCBIfam" id="TIGR00168">
    <property type="entry name" value="infC"/>
    <property type="match status" value="1"/>
</dbReference>
<dbReference type="PANTHER" id="PTHR10938">
    <property type="entry name" value="TRANSLATION INITIATION FACTOR IF-3"/>
    <property type="match status" value="1"/>
</dbReference>
<dbReference type="PANTHER" id="PTHR10938:SF0">
    <property type="entry name" value="TRANSLATION INITIATION FACTOR IF-3, MITOCHONDRIAL"/>
    <property type="match status" value="1"/>
</dbReference>
<dbReference type="Pfam" id="PF00707">
    <property type="entry name" value="IF3_C"/>
    <property type="match status" value="1"/>
</dbReference>
<dbReference type="Pfam" id="PF05198">
    <property type="entry name" value="IF3_N"/>
    <property type="match status" value="1"/>
</dbReference>
<dbReference type="SUPFAM" id="SSF55200">
    <property type="entry name" value="Translation initiation factor IF3, C-terminal domain"/>
    <property type="match status" value="1"/>
</dbReference>
<dbReference type="SUPFAM" id="SSF54364">
    <property type="entry name" value="Translation initiation factor IF3, N-terminal domain"/>
    <property type="match status" value="1"/>
</dbReference>
<dbReference type="PROSITE" id="PS00938">
    <property type="entry name" value="IF3"/>
    <property type="match status" value="1"/>
</dbReference>
<accession>A7ZAZ8</accession>
<name>IF3_CAMC1</name>
<organism>
    <name type="scientific">Campylobacter concisus (strain 13826)</name>
    <dbReference type="NCBI Taxonomy" id="360104"/>
    <lineage>
        <taxon>Bacteria</taxon>
        <taxon>Pseudomonadati</taxon>
        <taxon>Campylobacterota</taxon>
        <taxon>Epsilonproteobacteria</taxon>
        <taxon>Campylobacterales</taxon>
        <taxon>Campylobacteraceae</taxon>
        <taxon>Campylobacter</taxon>
    </lineage>
</organism>
<gene>
    <name evidence="1" type="primary">infC</name>
    <name type="ordered locus">Ccon26_00340</name>
    <name type="ORF">CCC13826_1818</name>
</gene>
<sequence>MSKENEVLLNEDIRAREVRCVGDDGTAYGVISRDEALEISNKLGLDLVLIAPDAKPPVCKIMDYGKFRYQQEKKQKEAKKKQKTIEIKEIKLSVKIAQNDINYKVKHASEFLQDGKHVKFRVFLKGREMSTPEAGVAMLEKVWEMIKDEADRDKEPIIEGRYVNMLVTPKKG</sequence>
<evidence type="ECO:0000255" key="1">
    <source>
        <dbReference type="HAMAP-Rule" id="MF_00080"/>
    </source>
</evidence>
<protein>
    <recommendedName>
        <fullName evidence="1">Translation initiation factor IF-3</fullName>
    </recommendedName>
</protein>
<reference key="1">
    <citation type="submission" date="2007-10" db="EMBL/GenBank/DDBJ databases">
        <title>Genome sequence of Campylobacter concisus 13826 isolated from human feces.</title>
        <authorList>
            <person name="Fouts D.E."/>
            <person name="Mongodin E.F."/>
            <person name="Puiu D."/>
            <person name="Sebastian Y."/>
            <person name="Miller W.G."/>
            <person name="Mandrell R.E."/>
            <person name="On S."/>
            <person name="Nelson K.E."/>
        </authorList>
    </citation>
    <scope>NUCLEOTIDE SEQUENCE [LARGE SCALE GENOMIC DNA]</scope>
    <source>
        <strain>13826</strain>
    </source>
</reference>
<comment type="function">
    <text evidence="1">IF-3 binds to the 30S ribosomal subunit and shifts the equilibrium between 70S ribosomes and their 50S and 30S subunits in favor of the free subunits, thus enhancing the availability of 30S subunits on which protein synthesis initiation begins.</text>
</comment>
<comment type="subunit">
    <text evidence="1">Monomer.</text>
</comment>
<comment type="subcellular location">
    <subcellularLocation>
        <location evidence="1">Cytoplasm</location>
    </subcellularLocation>
</comment>
<comment type="similarity">
    <text evidence="1">Belongs to the IF-3 family.</text>
</comment>
<feature type="chain" id="PRO_1000071209" description="Translation initiation factor IF-3">
    <location>
        <begin position="1"/>
        <end position="172"/>
    </location>
</feature>